<comment type="function">
    <text evidence="3">Weakly agglutinates platelets at high doses by binding to GPIbalpha (GP1BA).</text>
</comment>
<comment type="subunit">
    <text>Heterodimer of subunits alpha and beta; disulfide-linked.</text>
</comment>
<comment type="subcellular location">
    <subcellularLocation>
        <location>Secreted</location>
    </subcellularLocation>
</comment>
<comment type="tissue specificity">
    <text>Expressed by the venom gland.</text>
</comment>
<comment type="miscellaneous">
    <text evidence="6">Monoclonal antibodies to glycoprotein IIb/IIIa, to bovine vWF, and to bovine serum albumin did not show any effect on the binding of AL-B to platelets.</text>
</comment>
<comment type="similarity">
    <text evidence="5">Belongs to the snaclec family.</text>
</comment>
<sequence length="146" mass="16871">MGRFIFGSFGLLVLFLSLSGTGADCPSDWSSYDLYCYKVFQQRMNWEDAEQFCRQQHTGSHLLSFHSSEEVDFVVSKTLPILKADFVWIGLTDVWSACRLQWSDGTELKYNAWTAESECIASKTTDNQWWTRSCSRTYPFVCKLEV</sequence>
<proteinExistence type="evidence at protein level"/>
<organism>
    <name type="scientific">Trimeresurus albolabris</name>
    <name type="common">White-lipped pit viper</name>
    <name type="synonym">Cryptelytrops albolabris</name>
    <dbReference type="NCBI Taxonomy" id="8765"/>
    <lineage>
        <taxon>Eukaryota</taxon>
        <taxon>Metazoa</taxon>
        <taxon>Chordata</taxon>
        <taxon>Craniata</taxon>
        <taxon>Vertebrata</taxon>
        <taxon>Euteleostomi</taxon>
        <taxon>Lepidosauria</taxon>
        <taxon>Squamata</taxon>
        <taxon>Bifurcata</taxon>
        <taxon>Unidentata</taxon>
        <taxon>Episquamata</taxon>
        <taxon>Toxicofera</taxon>
        <taxon>Serpentes</taxon>
        <taxon>Colubroidea</taxon>
        <taxon>Viperidae</taxon>
        <taxon>Crotalinae</taxon>
        <taxon>Trimeresurus</taxon>
    </lineage>
</organism>
<reference key="1">
    <citation type="journal article" date="2007" name="Platelets">
        <title>Molecular cloning and sequence analysis of alboaggregin B.</title>
        <authorList>
            <person name="Arpijuntarangkoon J."/>
            <person name="Rojnuckarin P."/>
            <person name="Muanpasitporn C."/>
            <person name="Kaeothip S."/>
            <person name="Sangvanich P."/>
            <person name="Intragumtornchai T."/>
        </authorList>
    </citation>
    <scope>NUCLEOTIDE SEQUENCE [MRNA]</scope>
    <scope>VARIANT LYS-51</scope>
</reference>
<reference key="2">
    <citation type="journal article" date="1996" name="Biochem. Biophys. Res. Commun.">
        <title>Primary structure of alboaggregin-B purified from the venom of Trimeresurus albolabris.</title>
        <authorList>
            <person name="Usami Y."/>
            <person name="Suzuki M."/>
            <person name="Yoshida E."/>
            <person name="Sakurai Y."/>
            <person name="Hirano K."/>
            <person name="Kawasaki T."/>
            <person name="Fujimura Y."/>
            <person name="Titani K."/>
        </authorList>
    </citation>
    <scope>PROTEIN SEQUENCE OF 24-146</scope>
</reference>
<reference key="3">
    <citation type="journal article" date="1998" name="Thromb. Haemost.">
        <title>Alboaggregins A and B. Structure and interaction with human platelets.</title>
        <authorList>
            <person name="Kowalska M.A."/>
            <person name="Tan L."/>
            <person name="Holt J.C."/>
            <person name="Peng M."/>
            <person name="Karczewski J."/>
            <person name="Calvete J.J."/>
            <person name="Niewiarowski S."/>
        </authorList>
    </citation>
    <scope>PROTEIN SEQUENCE OF 24-141</scope>
    <source>
        <tissue>Venom</tissue>
    </source>
</reference>
<reference key="4">
    <citation type="journal article" date="1993" name="Biochem. Biophys. Res. Commun.">
        <title>Alboaggregin-B and botrocetin, two snake venom proteins with highly homologous amino acid sequences but totally distinct functions on von Willebrand factor binding to platelets.</title>
        <authorList>
            <person name="Yoshida E."/>
            <person name="Fujimura Y."/>
            <person name="Miura S."/>
            <person name="Sugimoto M."/>
            <person name="Fukui H."/>
            <person name="Narita N."/>
            <person name="Usami Y."/>
            <person name="Suzuki M."/>
            <person name="Titani K."/>
        </authorList>
    </citation>
    <scope>PROTEIN SEQUENCE OF 24-63</scope>
    <source>
        <tissue>Venom</tissue>
    </source>
</reference>
<reference key="5">
    <citation type="journal article" date="1991" name="Biochemistry">
        <title>Alboaggregin-B: a new platelet agonist that binds to platelet membrane glycoprotein Ib.</title>
        <authorList>
            <person name="Peng M."/>
            <person name="Lu W."/>
            <person name="Kirby E.P."/>
        </authorList>
    </citation>
    <scope>FUNCTION</scope>
    <source>
        <tissue>Venom</tissue>
    </source>
</reference>
<name>SLBB_TRIAB</name>
<dbReference type="EMBL" id="EF690368">
    <property type="protein sequence ID" value="ABS12077.1"/>
    <property type="molecule type" value="mRNA"/>
</dbReference>
<dbReference type="PIR" id="A56829">
    <property type="entry name" value="A56829"/>
</dbReference>
<dbReference type="SMR" id="P81116"/>
<dbReference type="MEROPS" id="I63.002"/>
<dbReference type="GO" id="GO:0005576">
    <property type="term" value="C:extracellular region"/>
    <property type="evidence" value="ECO:0007669"/>
    <property type="project" value="UniProtKB-SubCell"/>
</dbReference>
<dbReference type="GO" id="GO:0090729">
    <property type="term" value="F:toxin activity"/>
    <property type="evidence" value="ECO:0007669"/>
    <property type="project" value="UniProtKB-KW"/>
</dbReference>
<dbReference type="FunFam" id="3.10.100.10:FF:000087">
    <property type="entry name" value="Snaclec rhodocetin subunit delta"/>
    <property type="match status" value="1"/>
</dbReference>
<dbReference type="Gene3D" id="3.10.100.10">
    <property type="entry name" value="Mannose-Binding Protein A, subunit A"/>
    <property type="match status" value="1"/>
</dbReference>
<dbReference type="InterPro" id="IPR001304">
    <property type="entry name" value="C-type_lectin-like"/>
</dbReference>
<dbReference type="InterPro" id="IPR016186">
    <property type="entry name" value="C-type_lectin-like/link_sf"/>
</dbReference>
<dbReference type="InterPro" id="IPR050111">
    <property type="entry name" value="C-type_lectin/snaclec_domain"/>
</dbReference>
<dbReference type="InterPro" id="IPR016187">
    <property type="entry name" value="CTDL_fold"/>
</dbReference>
<dbReference type="PANTHER" id="PTHR22803">
    <property type="entry name" value="MANNOSE, PHOSPHOLIPASE, LECTIN RECEPTOR RELATED"/>
    <property type="match status" value="1"/>
</dbReference>
<dbReference type="Pfam" id="PF00059">
    <property type="entry name" value="Lectin_C"/>
    <property type="match status" value="1"/>
</dbReference>
<dbReference type="PRINTS" id="PR01504">
    <property type="entry name" value="PNCREATITSAP"/>
</dbReference>
<dbReference type="SMART" id="SM00034">
    <property type="entry name" value="CLECT"/>
    <property type="match status" value="1"/>
</dbReference>
<dbReference type="SUPFAM" id="SSF56436">
    <property type="entry name" value="C-type lectin-like"/>
    <property type="match status" value="1"/>
</dbReference>
<dbReference type="PROSITE" id="PS50041">
    <property type="entry name" value="C_TYPE_LECTIN_2"/>
    <property type="match status" value="1"/>
</dbReference>
<feature type="signal peptide" evidence="1">
    <location>
        <begin position="1"/>
        <end position="23"/>
    </location>
</feature>
<feature type="chain" id="PRO_0000046713" description="Snaclec alboaggregin-B subunit beta">
    <location>
        <begin position="24"/>
        <end position="146"/>
    </location>
</feature>
<feature type="domain" description="C-type lectin" evidence="2">
    <location>
        <begin position="24"/>
        <end position="143"/>
    </location>
</feature>
<feature type="disulfide bond" evidence="2">
    <location>
        <begin position="25"/>
        <end position="36"/>
    </location>
</feature>
<feature type="disulfide bond" evidence="2">
    <location>
        <begin position="53"/>
        <end position="142"/>
    </location>
</feature>
<feature type="disulfide bond" description="Interchain (with C-79 in subunit alpha)" evidence="2">
    <location>
        <position position="98"/>
    </location>
</feature>
<feature type="disulfide bond" evidence="2">
    <location>
        <begin position="119"/>
        <end position="134"/>
    </location>
</feature>
<feature type="sequence variant" evidence="4">
    <original>Q</original>
    <variation>K</variation>
    <location>
        <position position="51"/>
    </location>
</feature>
<feature type="sequence conflict" description="In Ref. 2; AA sequence and 4; AA sequence." evidence="5" ref="2 4">
    <original>K</original>
    <variation>R</variation>
    <location>
        <position position="38"/>
    </location>
</feature>
<feature type="sequence conflict" description="In Ref. 2; AA sequence and 4; AA sequence." evidence="5" ref="2 4">
    <original>QRM</original>
    <variation>EKK</variation>
    <location>
        <begin position="42"/>
        <end position="44"/>
    </location>
</feature>
<feature type="sequence conflict" description="In Ref. 2; AA sequence." evidence="5" ref="2">
    <original>Q</original>
    <variation>K</variation>
    <location>
        <position position="51"/>
    </location>
</feature>
<feature type="sequence conflict" description="In Ref. 2; AA sequence and 4; AA sequence." evidence="5" ref="2 4">
    <original>R</original>
    <variation>T</variation>
    <location>
        <position position="54"/>
    </location>
</feature>
<feature type="sequence conflict" description="In Ref. 2; AA sequence and 4; AA sequence." evidence="5" ref="2 4">
    <original>G</original>
    <variation>D</variation>
    <location>
        <position position="59"/>
    </location>
</feature>
<feature type="sequence conflict" description="In Ref. 4; AA sequence." evidence="5" ref="4">
    <original>L</original>
    <variation>I</variation>
    <location>
        <position position="62"/>
    </location>
</feature>
<feature type="sequence conflict" description="In Ref. 2; AA sequence and 4; AA sequence." evidence="5" ref="2 4">
    <original>L</original>
    <variation>V</variation>
    <location>
        <position position="63"/>
    </location>
</feature>
<feature type="sequence conflict" description="In Ref. 2; AA sequence." evidence="5" ref="2">
    <original>H</original>
    <variation>D</variation>
    <location>
        <position position="66"/>
    </location>
</feature>
<feature type="sequence conflict" description="In Ref. 3; AA sequence." evidence="5" ref="3">
    <original>V</original>
    <variation>A</variation>
    <location>
        <position position="71"/>
    </location>
</feature>
<feature type="sequence conflict" description="In Ref. 2; AA sequence." evidence="5" ref="2">
    <original>V</original>
    <variation>A</variation>
    <location>
        <position position="75"/>
    </location>
</feature>
<feature type="sequence conflict" description="In Ref. 2; AA sequence." evidence="5" ref="2">
    <original>LPILKADF</original>
    <variation>FPVLKHDL</variation>
    <location>
        <begin position="79"/>
        <end position="86"/>
    </location>
</feature>
<feature type="sequence conflict" description="In Ref. 2; AA sequence." evidence="5" ref="2">
    <original>TD</original>
    <variation>GS</variation>
    <location>
        <begin position="92"/>
        <end position="93"/>
    </location>
</feature>
<feature type="sequence conflict" description="In Ref. 2; AA sequence." evidence="5" ref="2">
    <original>S</original>
    <variation>N</variation>
    <location>
        <position position="96"/>
    </location>
</feature>
<feature type="sequence conflict" description="In Ref. 2; AA sequence." evidence="5" ref="2">
    <original>R</original>
    <variation>K</variation>
    <location>
        <position position="99"/>
    </location>
</feature>
<feature type="sequence conflict" description="In Ref. 3; AA sequence." evidence="5" ref="3">
    <original>ELKY</original>
    <variation>TLSK</variation>
    <location>
        <begin position="107"/>
        <end position="110"/>
    </location>
</feature>
<feature type="sequence conflict" description="In Ref. 2; AA sequence." evidence="5" ref="2">
    <original>T</original>
    <variation>S</variation>
    <location>
        <position position="114"/>
    </location>
</feature>
<feature type="sequence conflict" description="In Ref. 2; AA sequence." evidence="5" ref="2">
    <original>A</original>
    <variation>T</variation>
    <location>
        <position position="121"/>
    </location>
</feature>
<feature type="sequence conflict" description="In Ref. 2; AA sequence." evidence="5" ref="2">
    <original>T</original>
    <variation>S</variation>
    <location>
        <position position="124"/>
    </location>
</feature>
<feature type="sequence conflict" description="In Ref. 2; AA sequence." evidence="5" ref="2">
    <original>QWW</original>
    <variation>EWL</variation>
    <location>
        <begin position="128"/>
        <end position="130"/>
    </location>
</feature>
<feature type="sequence conflict" description="In Ref. 2; AA sequence." evidence="5" ref="2">
    <original>LEV</original>
    <variation>FQA</variation>
    <location>
        <begin position="144"/>
        <end position="146"/>
    </location>
</feature>
<protein>
    <recommendedName>
        <fullName>Snaclec alboaggregin-B subunit beta</fullName>
        <shortName>AL-B subunit beta</shortName>
    </recommendedName>
    <alternativeName>
        <fullName>25-kDa alboaggregin</fullName>
    </alternativeName>
</protein>
<keyword id="KW-0903">Direct protein sequencing</keyword>
<keyword id="KW-1015">Disulfide bond</keyword>
<keyword id="KW-1199">Hemostasis impairing toxin</keyword>
<keyword id="KW-1202">Platelet aggregation activating toxin</keyword>
<keyword id="KW-0964">Secreted</keyword>
<keyword id="KW-0732">Signal</keyword>
<keyword id="KW-0800">Toxin</keyword>
<evidence type="ECO:0000255" key="1"/>
<evidence type="ECO:0000255" key="2">
    <source>
        <dbReference type="PROSITE-ProRule" id="PRU00040"/>
    </source>
</evidence>
<evidence type="ECO:0000269" key="3">
    <source>
    </source>
</evidence>
<evidence type="ECO:0000269" key="4">
    <source>
    </source>
</evidence>
<evidence type="ECO:0000305" key="5"/>
<evidence type="ECO:0000305" key="6">
    <source>
    </source>
</evidence>
<accession>P81116</accession>
<accession>A7LAC9</accession>
<accession>Q9PS20</accession>